<name>METN_LEIXX</name>
<protein>
    <recommendedName>
        <fullName evidence="1">Methionine import ATP-binding protein MetN</fullName>
        <ecNumber evidence="1">7.4.2.11</ecNumber>
    </recommendedName>
</protein>
<dbReference type="EC" id="7.4.2.11" evidence="1"/>
<dbReference type="EMBL" id="AE016822">
    <property type="protein sequence ID" value="AAT89375.1"/>
    <property type="molecule type" value="Genomic_DNA"/>
</dbReference>
<dbReference type="RefSeq" id="WP_011186365.1">
    <property type="nucleotide sequence ID" value="NC_006087.1"/>
</dbReference>
<dbReference type="SMR" id="Q6AE21"/>
<dbReference type="STRING" id="281090.Lxx15770"/>
<dbReference type="KEGG" id="lxx:Lxx15770"/>
<dbReference type="eggNOG" id="COG1135">
    <property type="taxonomic scope" value="Bacteria"/>
</dbReference>
<dbReference type="HOGENOM" id="CLU_000604_1_3_11"/>
<dbReference type="Proteomes" id="UP000001306">
    <property type="component" value="Chromosome"/>
</dbReference>
<dbReference type="GO" id="GO:0005886">
    <property type="term" value="C:plasma membrane"/>
    <property type="evidence" value="ECO:0007669"/>
    <property type="project" value="UniProtKB-SubCell"/>
</dbReference>
<dbReference type="GO" id="GO:0033232">
    <property type="term" value="F:ABC-type D-methionine transporter activity"/>
    <property type="evidence" value="ECO:0007669"/>
    <property type="project" value="UniProtKB-EC"/>
</dbReference>
<dbReference type="GO" id="GO:0005524">
    <property type="term" value="F:ATP binding"/>
    <property type="evidence" value="ECO:0007669"/>
    <property type="project" value="UniProtKB-KW"/>
</dbReference>
<dbReference type="GO" id="GO:0016887">
    <property type="term" value="F:ATP hydrolysis activity"/>
    <property type="evidence" value="ECO:0007669"/>
    <property type="project" value="InterPro"/>
</dbReference>
<dbReference type="CDD" id="cd03258">
    <property type="entry name" value="ABC_MetN_methionine_transporter"/>
    <property type="match status" value="1"/>
</dbReference>
<dbReference type="FunFam" id="3.40.50.300:FF:000056">
    <property type="entry name" value="Cell division ATP-binding protein FtsE"/>
    <property type="match status" value="1"/>
</dbReference>
<dbReference type="Gene3D" id="3.30.70.260">
    <property type="match status" value="1"/>
</dbReference>
<dbReference type="Gene3D" id="3.40.50.300">
    <property type="entry name" value="P-loop containing nucleotide triphosphate hydrolases"/>
    <property type="match status" value="1"/>
</dbReference>
<dbReference type="InterPro" id="IPR003593">
    <property type="entry name" value="AAA+_ATPase"/>
</dbReference>
<dbReference type="InterPro" id="IPR003439">
    <property type="entry name" value="ABC_transporter-like_ATP-bd"/>
</dbReference>
<dbReference type="InterPro" id="IPR017871">
    <property type="entry name" value="ABC_transporter-like_CS"/>
</dbReference>
<dbReference type="InterPro" id="IPR045865">
    <property type="entry name" value="ACT-like_dom_sf"/>
</dbReference>
<dbReference type="InterPro" id="IPR041701">
    <property type="entry name" value="MetN_ABC"/>
</dbReference>
<dbReference type="InterPro" id="IPR050086">
    <property type="entry name" value="MetN_ABC_transporter-like"/>
</dbReference>
<dbReference type="InterPro" id="IPR018449">
    <property type="entry name" value="NIL_domain"/>
</dbReference>
<dbReference type="InterPro" id="IPR027417">
    <property type="entry name" value="P-loop_NTPase"/>
</dbReference>
<dbReference type="PANTHER" id="PTHR43166">
    <property type="entry name" value="AMINO ACID IMPORT ATP-BINDING PROTEIN"/>
    <property type="match status" value="1"/>
</dbReference>
<dbReference type="PANTHER" id="PTHR43166:SF30">
    <property type="entry name" value="METHIONINE IMPORT ATP-BINDING PROTEIN METN"/>
    <property type="match status" value="1"/>
</dbReference>
<dbReference type="Pfam" id="PF00005">
    <property type="entry name" value="ABC_tran"/>
    <property type="match status" value="1"/>
</dbReference>
<dbReference type="Pfam" id="PF09383">
    <property type="entry name" value="NIL"/>
    <property type="match status" value="1"/>
</dbReference>
<dbReference type="SMART" id="SM00382">
    <property type="entry name" value="AAA"/>
    <property type="match status" value="1"/>
</dbReference>
<dbReference type="SMART" id="SM00930">
    <property type="entry name" value="NIL"/>
    <property type="match status" value="1"/>
</dbReference>
<dbReference type="SUPFAM" id="SSF55021">
    <property type="entry name" value="ACT-like"/>
    <property type="match status" value="1"/>
</dbReference>
<dbReference type="SUPFAM" id="SSF52540">
    <property type="entry name" value="P-loop containing nucleoside triphosphate hydrolases"/>
    <property type="match status" value="1"/>
</dbReference>
<dbReference type="PROSITE" id="PS00211">
    <property type="entry name" value="ABC_TRANSPORTER_1"/>
    <property type="match status" value="1"/>
</dbReference>
<dbReference type="PROSITE" id="PS50893">
    <property type="entry name" value="ABC_TRANSPORTER_2"/>
    <property type="match status" value="1"/>
</dbReference>
<dbReference type="PROSITE" id="PS51264">
    <property type="entry name" value="METN"/>
    <property type="match status" value="1"/>
</dbReference>
<evidence type="ECO:0000255" key="1">
    <source>
        <dbReference type="HAMAP-Rule" id="MF_01719"/>
    </source>
</evidence>
<comment type="function">
    <text evidence="1">Part of the ABC transporter complex MetNIQ involved in methionine import. Responsible for energy coupling to the transport system.</text>
</comment>
<comment type="catalytic activity">
    <reaction evidence="1">
        <text>L-methionine(out) + ATP + H2O = L-methionine(in) + ADP + phosphate + H(+)</text>
        <dbReference type="Rhea" id="RHEA:29779"/>
        <dbReference type="ChEBI" id="CHEBI:15377"/>
        <dbReference type="ChEBI" id="CHEBI:15378"/>
        <dbReference type="ChEBI" id="CHEBI:30616"/>
        <dbReference type="ChEBI" id="CHEBI:43474"/>
        <dbReference type="ChEBI" id="CHEBI:57844"/>
        <dbReference type="ChEBI" id="CHEBI:456216"/>
        <dbReference type="EC" id="7.4.2.11"/>
    </reaction>
</comment>
<comment type="catalytic activity">
    <reaction evidence="1">
        <text>D-methionine(out) + ATP + H2O = D-methionine(in) + ADP + phosphate + H(+)</text>
        <dbReference type="Rhea" id="RHEA:29767"/>
        <dbReference type="ChEBI" id="CHEBI:15377"/>
        <dbReference type="ChEBI" id="CHEBI:15378"/>
        <dbReference type="ChEBI" id="CHEBI:30616"/>
        <dbReference type="ChEBI" id="CHEBI:43474"/>
        <dbReference type="ChEBI" id="CHEBI:57932"/>
        <dbReference type="ChEBI" id="CHEBI:456216"/>
        <dbReference type="EC" id="7.4.2.11"/>
    </reaction>
</comment>
<comment type="subunit">
    <text evidence="1">The complex is composed of two ATP-binding proteins (MetN), two transmembrane proteins (MetI) and a solute-binding protein (MetQ).</text>
</comment>
<comment type="subcellular location">
    <subcellularLocation>
        <location evidence="1">Cell membrane</location>
        <topology evidence="1">Peripheral membrane protein</topology>
    </subcellularLocation>
</comment>
<comment type="similarity">
    <text evidence="1">Belongs to the ABC transporter superfamily. Methionine importer (TC 3.A.1.24) family.</text>
</comment>
<proteinExistence type="inferred from homology"/>
<accession>Q6AE21</accession>
<gene>
    <name evidence="1" type="primary">metN</name>
    <name type="ordered locus">Lxx15770</name>
</gene>
<feature type="chain" id="PRO_0000270325" description="Methionine import ATP-binding protein MetN">
    <location>
        <begin position="1"/>
        <end position="340"/>
    </location>
</feature>
<feature type="domain" description="ABC transporter" evidence="1">
    <location>
        <begin position="5"/>
        <end position="243"/>
    </location>
</feature>
<feature type="binding site" evidence="1">
    <location>
        <begin position="40"/>
        <end position="47"/>
    </location>
    <ligand>
        <name>ATP</name>
        <dbReference type="ChEBI" id="CHEBI:30616"/>
    </ligand>
</feature>
<sequence>MAAHIEFRGVTKSFGSGDTPAALDGLDLTIDRGEIFCIIGYSGAGKSTLVRLINALEHPSSGSVVVDGRDLTALRERELCGVRAGIGMIFQQFNLFRSRTVFGNIAYPLKIAGWPADKRKQRVAELLAFVGLTEKAWAYPEQLSGGQKQRVGIARALATNPGILLADEATSSLDPETTADVLALLKRVNAELGVTIVVITHEMEVVRSIADRVAVLEAGRVIETGTVFEVFSNPQTTTARRFVGTVLRNQPGAADVERLRGKHSGRIVSARIQDDGRLGSVLSDAVGRHCVRFEIVYGGISALQGRSFGSLTLELIGEPADVDALIADLRGATEIEEVAA</sequence>
<organism>
    <name type="scientific">Leifsonia xyli subsp. xyli (strain CTCB07)</name>
    <dbReference type="NCBI Taxonomy" id="281090"/>
    <lineage>
        <taxon>Bacteria</taxon>
        <taxon>Bacillati</taxon>
        <taxon>Actinomycetota</taxon>
        <taxon>Actinomycetes</taxon>
        <taxon>Micrococcales</taxon>
        <taxon>Microbacteriaceae</taxon>
        <taxon>Leifsonia</taxon>
    </lineage>
</organism>
<keyword id="KW-0029">Amino-acid transport</keyword>
<keyword id="KW-0067">ATP-binding</keyword>
<keyword id="KW-1003">Cell membrane</keyword>
<keyword id="KW-0472">Membrane</keyword>
<keyword id="KW-0547">Nucleotide-binding</keyword>
<keyword id="KW-1185">Reference proteome</keyword>
<keyword id="KW-1278">Translocase</keyword>
<keyword id="KW-0813">Transport</keyword>
<reference key="1">
    <citation type="journal article" date="2004" name="Mol. Plant Microbe Interact.">
        <title>The genome sequence of the Gram-positive sugarcane pathogen Leifsonia xyli subsp. xyli.</title>
        <authorList>
            <person name="Monteiro-Vitorello C.B."/>
            <person name="Camargo L.E.A."/>
            <person name="Van Sluys M.A."/>
            <person name="Kitajima J.P."/>
            <person name="Truffi D."/>
            <person name="do Amaral A.M."/>
            <person name="Harakava R."/>
            <person name="de Oliveira J.C.F."/>
            <person name="Wood D."/>
            <person name="de Oliveira M.C."/>
            <person name="Miyaki C.Y."/>
            <person name="Takita M.A."/>
            <person name="da Silva A.C.R."/>
            <person name="Furlan L.R."/>
            <person name="Carraro D.M."/>
            <person name="Camarotte G."/>
            <person name="Almeida N.F. Jr."/>
            <person name="Carrer H."/>
            <person name="Coutinho L.L."/>
            <person name="El-Dorry H.A."/>
            <person name="Ferro M.I.T."/>
            <person name="Gagliardi P.R."/>
            <person name="Giglioti E."/>
            <person name="Goldman M.H.S."/>
            <person name="Goldman G.H."/>
            <person name="Kimura E.T."/>
            <person name="Ferro E.S."/>
            <person name="Kuramae E.E."/>
            <person name="Lemos E.G.M."/>
            <person name="Lemos M.V.F."/>
            <person name="Mauro S.M.Z."/>
            <person name="Machado M.A."/>
            <person name="Marino C.L."/>
            <person name="Menck C.F."/>
            <person name="Nunes L.R."/>
            <person name="Oliveira R.C."/>
            <person name="Pereira G.G."/>
            <person name="Siqueira W."/>
            <person name="de Souza A.A."/>
            <person name="Tsai S.M."/>
            <person name="Zanca A.S."/>
            <person name="Simpson A.J.G."/>
            <person name="Brumbley S.M."/>
            <person name="Setubal J.C."/>
        </authorList>
    </citation>
    <scope>NUCLEOTIDE SEQUENCE [LARGE SCALE GENOMIC DNA]</scope>
    <source>
        <strain>CTCB07</strain>
    </source>
</reference>